<evidence type="ECO:0000255" key="1">
    <source>
        <dbReference type="HAMAP-Rule" id="MF_00212"/>
    </source>
</evidence>
<evidence type="ECO:0000256" key="2">
    <source>
        <dbReference type="SAM" id="MobiDB-lite"/>
    </source>
</evidence>
<name>MQO_CITK8</name>
<feature type="chain" id="PRO_1000023795" description="Probable malate:quinone oxidoreductase">
    <location>
        <begin position="1"/>
        <end position="553"/>
    </location>
</feature>
<feature type="region of interest" description="Disordered" evidence="2">
    <location>
        <begin position="534"/>
        <end position="553"/>
    </location>
</feature>
<feature type="compositionally biased region" description="Low complexity" evidence="2">
    <location>
        <begin position="534"/>
        <end position="543"/>
    </location>
</feature>
<accession>A8AE07</accession>
<comment type="catalytic activity">
    <reaction evidence="1">
        <text>(S)-malate + a quinone = a quinol + oxaloacetate</text>
        <dbReference type="Rhea" id="RHEA:46012"/>
        <dbReference type="ChEBI" id="CHEBI:15589"/>
        <dbReference type="ChEBI" id="CHEBI:16452"/>
        <dbReference type="ChEBI" id="CHEBI:24646"/>
        <dbReference type="ChEBI" id="CHEBI:132124"/>
        <dbReference type="EC" id="1.1.5.4"/>
    </reaction>
</comment>
<comment type="cofactor">
    <cofactor evidence="1">
        <name>FAD</name>
        <dbReference type="ChEBI" id="CHEBI:57692"/>
    </cofactor>
</comment>
<comment type="pathway">
    <text evidence="1">Carbohydrate metabolism; tricarboxylic acid cycle; oxaloacetate from (S)-malate (quinone route): step 1/1.</text>
</comment>
<comment type="similarity">
    <text evidence="1">Belongs to the MQO family.</text>
</comment>
<organism>
    <name type="scientific">Citrobacter koseri (strain ATCC BAA-895 / CDC 4225-83 / SGSC4696)</name>
    <dbReference type="NCBI Taxonomy" id="290338"/>
    <lineage>
        <taxon>Bacteria</taxon>
        <taxon>Pseudomonadati</taxon>
        <taxon>Pseudomonadota</taxon>
        <taxon>Gammaproteobacteria</taxon>
        <taxon>Enterobacterales</taxon>
        <taxon>Enterobacteriaceae</taxon>
        <taxon>Citrobacter</taxon>
    </lineage>
</organism>
<proteinExistence type="inferred from homology"/>
<keyword id="KW-0274">FAD</keyword>
<keyword id="KW-0285">Flavoprotein</keyword>
<keyword id="KW-0560">Oxidoreductase</keyword>
<keyword id="KW-1185">Reference proteome</keyword>
<keyword id="KW-0816">Tricarboxylic acid cycle</keyword>
<dbReference type="EC" id="1.1.5.4" evidence="1"/>
<dbReference type="EMBL" id="CP000822">
    <property type="protein sequence ID" value="ABV11720.1"/>
    <property type="molecule type" value="Genomic_DNA"/>
</dbReference>
<dbReference type="RefSeq" id="WP_012131544.1">
    <property type="nucleotide sequence ID" value="NC_009792.1"/>
</dbReference>
<dbReference type="SMR" id="A8AE07"/>
<dbReference type="STRING" id="290338.CKO_00565"/>
<dbReference type="GeneID" id="45134801"/>
<dbReference type="KEGG" id="cko:CKO_00565"/>
<dbReference type="HOGENOM" id="CLU_028151_0_0_6"/>
<dbReference type="OrthoDB" id="9763983at2"/>
<dbReference type="UniPathway" id="UPA00223">
    <property type="reaction ID" value="UER01008"/>
</dbReference>
<dbReference type="Proteomes" id="UP000008148">
    <property type="component" value="Chromosome"/>
</dbReference>
<dbReference type="GO" id="GO:0047545">
    <property type="term" value="F:2-hydroxyglutarate dehydrogenase activity"/>
    <property type="evidence" value="ECO:0007669"/>
    <property type="project" value="TreeGrafter"/>
</dbReference>
<dbReference type="GO" id="GO:0008924">
    <property type="term" value="F:L-malate dehydrogenase (quinone) activity"/>
    <property type="evidence" value="ECO:0007669"/>
    <property type="project" value="UniProtKB-UniRule"/>
</dbReference>
<dbReference type="GO" id="GO:0006099">
    <property type="term" value="P:tricarboxylic acid cycle"/>
    <property type="evidence" value="ECO:0007669"/>
    <property type="project" value="UniProtKB-UniRule"/>
</dbReference>
<dbReference type="Gene3D" id="3.30.9.10">
    <property type="entry name" value="D-Amino Acid Oxidase, subunit A, domain 2"/>
    <property type="match status" value="1"/>
</dbReference>
<dbReference type="Gene3D" id="3.50.50.60">
    <property type="entry name" value="FAD/NAD(P)-binding domain"/>
    <property type="match status" value="1"/>
</dbReference>
<dbReference type="HAMAP" id="MF_00212">
    <property type="entry name" value="MQO"/>
    <property type="match status" value="1"/>
</dbReference>
<dbReference type="InterPro" id="IPR036188">
    <property type="entry name" value="FAD/NAD-bd_sf"/>
</dbReference>
<dbReference type="InterPro" id="IPR006231">
    <property type="entry name" value="MQO"/>
</dbReference>
<dbReference type="NCBIfam" id="TIGR01320">
    <property type="entry name" value="mal_quin_oxido"/>
    <property type="match status" value="1"/>
</dbReference>
<dbReference type="NCBIfam" id="NF003603">
    <property type="entry name" value="PRK05257.1-1"/>
    <property type="match status" value="1"/>
</dbReference>
<dbReference type="NCBIfam" id="NF003605">
    <property type="entry name" value="PRK05257.1-4"/>
    <property type="match status" value="1"/>
</dbReference>
<dbReference type="NCBIfam" id="NF003606">
    <property type="entry name" value="PRK05257.2-1"/>
    <property type="match status" value="1"/>
</dbReference>
<dbReference type="NCBIfam" id="NF003609">
    <property type="entry name" value="PRK05257.2-5"/>
    <property type="match status" value="1"/>
</dbReference>
<dbReference type="NCBIfam" id="NF003611">
    <property type="entry name" value="PRK05257.3-2"/>
    <property type="match status" value="1"/>
</dbReference>
<dbReference type="NCBIfam" id="NF009875">
    <property type="entry name" value="PRK13339.1"/>
    <property type="match status" value="1"/>
</dbReference>
<dbReference type="PANTHER" id="PTHR43104">
    <property type="entry name" value="L-2-HYDROXYGLUTARATE DEHYDROGENASE, MITOCHONDRIAL"/>
    <property type="match status" value="1"/>
</dbReference>
<dbReference type="PANTHER" id="PTHR43104:SF2">
    <property type="entry name" value="L-2-HYDROXYGLUTARATE DEHYDROGENASE, MITOCHONDRIAL"/>
    <property type="match status" value="1"/>
</dbReference>
<dbReference type="Pfam" id="PF06039">
    <property type="entry name" value="Mqo"/>
    <property type="match status" value="1"/>
</dbReference>
<dbReference type="SUPFAM" id="SSF51905">
    <property type="entry name" value="FAD/NAD(P)-binding domain"/>
    <property type="match status" value="1"/>
</dbReference>
<sequence length="553" mass="60874">MKKVTAMLFTMAVGLNAVSMAAKAKATEEQETDVLLIGGGIMSATLGTYLQELEPEWSMTMVERLDGVAQESSNGWNNAGTGHSALMELNYTPKKADGSVSIEKAVDINEAFQVSRQFWAHQVQSGVLHEPHSFINTVPHMSFVWGDDNVNFLRARYTALQQSTLFRGMRYSEDHAQIKEWAPLVMEGRDPKQKVAATRTEIGTDVNYGEITRQLVASLQKKPNFALQLNTEVRGFKRNADNSWTVTVADLKNGEAEHAIKAKFVFIGAGGAALKLLQETGIPEAKDYAGFPVGGQFLVSENPDVVNNHLAKVYGQASVGAPPMSVPHIDTRILDGKRVVLFGPFATFSTKFLKNGSLWDLLSSTTTSNFMPMVNVGMDNFDLVKYLISQVMLSDDERFEALKEYYPQAKKEDWRLWQAGQRVQIIKRDEDKGGVLRLGTEVVSDKDGTIAALLGASPGASTAAPIMLHLMEKVFKEKVASPEWQAKLKTIVPSYGTKLNGNIEATEQELQYTSDVLGLKYDKPQVVDEAPKPQLKPQVQPQPAHKAVADIAL</sequence>
<protein>
    <recommendedName>
        <fullName evidence="1">Probable malate:quinone oxidoreductase</fullName>
        <ecNumber evidence="1">1.1.5.4</ecNumber>
    </recommendedName>
    <alternativeName>
        <fullName evidence="1">MQO</fullName>
    </alternativeName>
    <alternativeName>
        <fullName evidence="1">Malate dehydrogenase [quinone]</fullName>
    </alternativeName>
</protein>
<reference key="1">
    <citation type="submission" date="2007-08" db="EMBL/GenBank/DDBJ databases">
        <authorList>
            <consortium name="The Citrobacter koseri Genome Sequencing Project"/>
            <person name="McClelland M."/>
            <person name="Sanderson E.K."/>
            <person name="Porwollik S."/>
            <person name="Spieth J."/>
            <person name="Clifton W.S."/>
            <person name="Latreille P."/>
            <person name="Courtney L."/>
            <person name="Wang C."/>
            <person name="Pepin K."/>
            <person name="Bhonagiri V."/>
            <person name="Nash W."/>
            <person name="Johnson M."/>
            <person name="Thiruvilangam P."/>
            <person name="Wilson R."/>
        </authorList>
    </citation>
    <scope>NUCLEOTIDE SEQUENCE [LARGE SCALE GENOMIC DNA]</scope>
    <source>
        <strain>ATCC BAA-895 / CDC 4225-83 / SGSC4696</strain>
    </source>
</reference>
<gene>
    <name evidence="1" type="primary">mqo</name>
    <name type="ordered locus">CKO_00565</name>
</gene>